<proteinExistence type="inferred from homology"/>
<name>RS11_CENSY</name>
<evidence type="ECO:0000255" key="1">
    <source>
        <dbReference type="HAMAP-Rule" id="MF_01310"/>
    </source>
</evidence>
<evidence type="ECO:0000256" key="2">
    <source>
        <dbReference type="SAM" id="MobiDB-lite"/>
    </source>
</evidence>
<evidence type="ECO:0000305" key="3"/>
<dbReference type="EMBL" id="DP000238">
    <property type="protein sequence ID" value="ABK77706.1"/>
    <property type="status" value="ALT_INIT"/>
    <property type="molecule type" value="Genomic_DNA"/>
</dbReference>
<dbReference type="SMR" id="A0RWI9"/>
<dbReference type="STRING" id="414004.CENSYa_1076"/>
<dbReference type="EnsemblBacteria" id="ABK77706">
    <property type="protein sequence ID" value="ABK77706"/>
    <property type="gene ID" value="CENSYa_1076"/>
</dbReference>
<dbReference type="KEGG" id="csy:CENSYa_1076"/>
<dbReference type="PATRIC" id="fig|414004.10.peg.985"/>
<dbReference type="HOGENOM" id="CLU_072439_6_1_2"/>
<dbReference type="Proteomes" id="UP000000758">
    <property type="component" value="Chromosome"/>
</dbReference>
<dbReference type="GO" id="GO:1990904">
    <property type="term" value="C:ribonucleoprotein complex"/>
    <property type="evidence" value="ECO:0007669"/>
    <property type="project" value="UniProtKB-KW"/>
</dbReference>
<dbReference type="GO" id="GO:0005840">
    <property type="term" value="C:ribosome"/>
    <property type="evidence" value="ECO:0007669"/>
    <property type="project" value="UniProtKB-KW"/>
</dbReference>
<dbReference type="GO" id="GO:0019843">
    <property type="term" value="F:rRNA binding"/>
    <property type="evidence" value="ECO:0007669"/>
    <property type="project" value="UniProtKB-UniRule"/>
</dbReference>
<dbReference type="GO" id="GO:0003735">
    <property type="term" value="F:structural constituent of ribosome"/>
    <property type="evidence" value="ECO:0007669"/>
    <property type="project" value="InterPro"/>
</dbReference>
<dbReference type="GO" id="GO:0006412">
    <property type="term" value="P:translation"/>
    <property type="evidence" value="ECO:0007669"/>
    <property type="project" value="UniProtKB-UniRule"/>
</dbReference>
<dbReference type="FunFam" id="3.30.420.80:FF:000018">
    <property type="entry name" value="40S ribosomal protein S14"/>
    <property type="match status" value="1"/>
</dbReference>
<dbReference type="Gene3D" id="3.30.420.80">
    <property type="entry name" value="Ribosomal protein S11"/>
    <property type="match status" value="1"/>
</dbReference>
<dbReference type="HAMAP" id="MF_01310">
    <property type="entry name" value="Ribosomal_uS11"/>
    <property type="match status" value="1"/>
</dbReference>
<dbReference type="InterPro" id="IPR001971">
    <property type="entry name" value="Ribosomal_uS11"/>
</dbReference>
<dbReference type="InterPro" id="IPR019961">
    <property type="entry name" value="Ribosomal_uS11_archaeal"/>
</dbReference>
<dbReference type="InterPro" id="IPR018102">
    <property type="entry name" value="Ribosomal_uS11_CS"/>
</dbReference>
<dbReference type="InterPro" id="IPR036967">
    <property type="entry name" value="Ribosomal_uS11_sf"/>
</dbReference>
<dbReference type="NCBIfam" id="TIGR03628">
    <property type="entry name" value="arch_S11P"/>
    <property type="match status" value="1"/>
</dbReference>
<dbReference type="NCBIfam" id="NF007176">
    <property type="entry name" value="PRK09607.1"/>
    <property type="match status" value="1"/>
</dbReference>
<dbReference type="PANTHER" id="PTHR11759">
    <property type="entry name" value="40S RIBOSOMAL PROTEIN S14/30S RIBOSOMAL PROTEIN S11"/>
    <property type="match status" value="1"/>
</dbReference>
<dbReference type="Pfam" id="PF00411">
    <property type="entry name" value="Ribosomal_S11"/>
    <property type="match status" value="1"/>
</dbReference>
<dbReference type="SUPFAM" id="SSF53137">
    <property type="entry name" value="Translational machinery components"/>
    <property type="match status" value="1"/>
</dbReference>
<dbReference type="PROSITE" id="PS00054">
    <property type="entry name" value="RIBOSOMAL_S11"/>
    <property type="match status" value="1"/>
</dbReference>
<reference key="1">
    <citation type="journal article" date="2006" name="Proc. Natl. Acad. Sci. U.S.A.">
        <title>Genomic analysis of the uncultivated marine crenarchaeote Cenarchaeum symbiosum.</title>
        <authorList>
            <person name="Hallam S.J."/>
            <person name="Konstantinidis K.T."/>
            <person name="Putnam N."/>
            <person name="Schleper C."/>
            <person name="Watanabe Y."/>
            <person name="Sugahara J."/>
            <person name="Preston C."/>
            <person name="de la Torre J."/>
            <person name="Richardson P.M."/>
            <person name="DeLong E.F."/>
        </authorList>
    </citation>
    <scope>NUCLEOTIDE SEQUENCE [LARGE SCALE GENOMIC DNA]</scope>
    <source>
        <strain>A</strain>
    </source>
</reference>
<keyword id="KW-1185">Reference proteome</keyword>
<keyword id="KW-0687">Ribonucleoprotein</keyword>
<keyword id="KW-0689">Ribosomal protein</keyword>
<keyword id="KW-0694">RNA-binding</keyword>
<keyword id="KW-0699">rRNA-binding</keyword>
<comment type="function">
    <text evidence="1">Located on the platform of the 30S subunit.</text>
</comment>
<comment type="subunit">
    <text evidence="1">Part of the 30S ribosomal subunit.</text>
</comment>
<comment type="similarity">
    <text evidence="1">Belongs to the universal ribosomal protein uS11 family.</text>
</comment>
<comment type="sequence caution" evidence="3">
    <conflict type="erroneous initiation">
        <sequence resource="EMBL-CDS" id="ABK77706"/>
    </conflict>
</comment>
<gene>
    <name evidence="1" type="primary">rps11</name>
    <name type="ordered locus">CENSYa_1076</name>
</gene>
<organism>
    <name type="scientific">Cenarchaeum symbiosum (strain A)</name>
    <dbReference type="NCBI Taxonomy" id="414004"/>
    <lineage>
        <taxon>Archaea</taxon>
        <taxon>Nitrososphaerota</taxon>
        <taxon>Candidatus Cenarchaeales</taxon>
        <taxon>Candidatus Cenarchaeaceae</taxon>
        <taxon>Candidatus Cenarchaeum</taxon>
    </lineage>
</organism>
<sequence length="198" mass="20128">MSGTEAGAGEPAAEEPTKEAAQPEAGAPDAGTPEASAPEAGAAQPEAGTQPEAGTAQPEAPPEGTPETTPADEKLGIAHIYSSYNNTIIHMTDLTGAETVSISSGGVHVNADRYESSPFAAMKAANKVIESARAKGFTGFHIRVRAVGGVGSRVPGPGAQAAIRALARGGFRIGRIDDVTPIPHDTTRKKGGKRGRRV</sequence>
<protein>
    <recommendedName>
        <fullName evidence="1">Small ribosomal subunit protein uS11</fullName>
    </recommendedName>
    <alternativeName>
        <fullName evidence="3">30S ribosomal protein S11</fullName>
    </alternativeName>
</protein>
<accession>A0RWI9</accession>
<feature type="chain" id="PRO_0000294892" description="Small ribosomal subunit protein uS11">
    <location>
        <begin position="1"/>
        <end position="198"/>
    </location>
</feature>
<feature type="region of interest" description="Disordered" evidence="2">
    <location>
        <begin position="1"/>
        <end position="72"/>
    </location>
</feature>
<feature type="region of interest" description="Disordered" evidence="2">
    <location>
        <begin position="178"/>
        <end position="198"/>
    </location>
</feature>
<feature type="compositionally biased region" description="Low complexity" evidence="2">
    <location>
        <begin position="1"/>
        <end position="11"/>
    </location>
</feature>
<feature type="compositionally biased region" description="Low complexity" evidence="2">
    <location>
        <begin position="19"/>
        <end position="58"/>
    </location>
</feature>
<feature type="compositionally biased region" description="Basic residues" evidence="2">
    <location>
        <begin position="187"/>
        <end position="198"/>
    </location>
</feature>